<sequence>MSLQNFDPAIARLIDRERNRQETHLELIASENYVSEEVLQAQGSLLTNKYAEGYPGRRYYGGCKVVDEIENLAIERARKLFGCEYVNVQPHSGSQANQAVFLAVLEPGDRILGMSLAHGGHLTHGASVNFSGKFFQAFTYGLEKDSETLDYDQMEDLAREHRPKMIIAGASAYSRVIDFPRFRKICDEIGAYLMVDMAHYAGLIAAGVYPSPVGIADFITSTTHKTLRGPRGGLILAKAEYAAVLDKTIFPVYQGGPLMHVIAAKAVAFNEALGDEFKHYQQRVINNARTMADVLTRRGLRVVSGGTDCHMFLLDLRAMNITGKDAEALLESAHITLNKNAIPDDPQKPAITSGIRIGTPALTTRGFGEAECAEVANLIADLLEQPDNTARVENIRRRVMHLCECFPVYLLT</sequence>
<protein>
    <recommendedName>
        <fullName evidence="1">Serine hydroxymethyltransferase 1</fullName>
        <shortName evidence="1">SHMT 1</shortName>
        <shortName evidence="1">Serine methylase 1</shortName>
        <ecNumber evidence="1">2.1.2.1</ecNumber>
    </recommendedName>
</protein>
<organism>
    <name type="scientific">Pseudomonas fluorescens (strain Pf0-1)</name>
    <dbReference type="NCBI Taxonomy" id="205922"/>
    <lineage>
        <taxon>Bacteria</taxon>
        <taxon>Pseudomonadati</taxon>
        <taxon>Pseudomonadota</taxon>
        <taxon>Gammaproteobacteria</taxon>
        <taxon>Pseudomonadales</taxon>
        <taxon>Pseudomonadaceae</taxon>
        <taxon>Pseudomonas</taxon>
    </lineage>
</organism>
<gene>
    <name evidence="1" type="primary">glyA1</name>
    <name type="ordered locus">Pfl01_2312</name>
</gene>
<feature type="chain" id="PRO_0000235004" description="Serine hydroxymethyltransferase 1">
    <location>
        <begin position="1"/>
        <end position="412"/>
    </location>
</feature>
<feature type="binding site" evidence="1">
    <location>
        <position position="116"/>
    </location>
    <ligand>
        <name>(6S)-5,6,7,8-tetrahydrofolate</name>
        <dbReference type="ChEBI" id="CHEBI:57453"/>
    </ligand>
</feature>
<feature type="binding site" evidence="1">
    <location>
        <begin position="120"/>
        <end position="122"/>
    </location>
    <ligand>
        <name>(6S)-5,6,7,8-tetrahydrofolate</name>
        <dbReference type="ChEBI" id="CHEBI:57453"/>
    </ligand>
</feature>
<feature type="site" description="Plays an important role in substrate specificity" evidence="1">
    <location>
        <position position="224"/>
    </location>
</feature>
<feature type="modified residue" description="N6-(pyridoxal phosphate)lysine" evidence="1">
    <location>
        <position position="225"/>
    </location>
</feature>
<reference key="1">
    <citation type="journal article" date="2009" name="Genome Biol.">
        <title>Genomic and genetic analyses of diversity and plant interactions of Pseudomonas fluorescens.</title>
        <authorList>
            <person name="Silby M.W."/>
            <person name="Cerdeno-Tarraga A.M."/>
            <person name="Vernikos G.S."/>
            <person name="Giddens S.R."/>
            <person name="Jackson R.W."/>
            <person name="Preston G.M."/>
            <person name="Zhang X.-X."/>
            <person name="Moon C.D."/>
            <person name="Gehrig S.M."/>
            <person name="Godfrey S.A.C."/>
            <person name="Knight C.G."/>
            <person name="Malone J.G."/>
            <person name="Robinson Z."/>
            <person name="Spiers A.J."/>
            <person name="Harris S."/>
            <person name="Challis G.L."/>
            <person name="Yaxley A.M."/>
            <person name="Harris D."/>
            <person name="Seeger K."/>
            <person name="Murphy L."/>
            <person name="Rutter S."/>
            <person name="Squares R."/>
            <person name="Quail M.A."/>
            <person name="Saunders E."/>
            <person name="Mavromatis K."/>
            <person name="Brettin T.S."/>
            <person name="Bentley S.D."/>
            <person name="Hothersall J."/>
            <person name="Stephens E."/>
            <person name="Thomas C.M."/>
            <person name="Parkhill J."/>
            <person name="Levy S.B."/>
            <person name="Rainey P.B."/>
            <person name="Thomson N.R."/>
        </authorList>
    </citation>
    <scope>NUCLEOTIDE SEQUENCE [LARGE SCALE GENOMIC DNA]</scope>
    <source>
        <strain>Pf0-1</strain>
    </source>
</reference>
<proteinExistence type="inferred from homology"/>
<name>GLYA1_PSEPF</name>
<dbReference type="EC" id="2.1.2.1" evidence="1"/>
<dbReference type="EMBL" id="CP000094">
    <property type="protein sequence ID" value="ABA74055.1"/>
    <property type="molecule type" value="Genomic_DNA"/>
</dbReference>
<dbReference type="SMR" id="Q3KDV1"/>
<dbReference type="KEGG" id="pfo:Pfl01_2312"/>
<dbReference type="eggNOG" id="COG0112">
    <property type="taxonomic scope" value="Bacteria"/>
</dbReference>
<dbReference type="HOGENOM" id="CLU_022477_2_1_6"/>
<dbReference type="UniPathway" id="UPA00193"/>
<dbReference type="UniPathway" id="UPA00288">
    <property type="reaction ID" value="UER01023"/>
</dbReference>
<dbReference type="Proteomes" id="UP000002704">
    <property type="component" value="Chromosome"/>
</dbReference>
<dbReference type="GO" id="GO:0005829">
    <property type="term" value="C:cytosol"/>
    <property type="evidence" value="ECO:0007669"/>
    <property type="project" value="TreeGrafter"/>
</dbReference>
<dbReference type="GO" id="GO:0004372">
    <property type="term" value="F:glycine hydroxymethyltransferase activity"/>
    <property type="evidence" value="ECO:0007669"/>
    <property type="project" value="UniProtKB-UniRule"/>
</dbReference>
<dbReference type="GO" id="GO:0030170">
    <property type="term" value="F:pyridoxal phosphate binding"/>
    <property type="evidence" value="ECO:0007669"/>
    <property type="project" value="UniProtKB-UniRule"/>
</dbReference>
<dbReference type="GO" id="GO:0019264">
    <property type="term" value="P:glycine biosynthetic process from serine"/>
    <property type="evidence" value="ECO:0007669"/>
    <property type="project" value="UniProtKB-UniRule"/>
</dbReference>
<dbReference type="GO" id="GO:0035999">
    <property type="term" value="P:tetrahydrofolate interconversion"/>
    <property type="evidence" value="ECO:0007669"/>
    <property type="project" value="UniProtKB-UniRule"/>
</dbReference>
<dbReference type="CDD" id="cd00378">
    <property type="entry name" value="SHMT"/>
    <property type="match status" value="1"/>
</dbReference>
<dbReference type="FunFam" id="3.40.640.10:FF:000001">
    <property type="entry name" value="Serine hydroxymethyltransferase"/>
    <property type="match status" value="1"/>
</dbReference>
<dbReference type="FunFam" id="3.90.1150.10:FF:000003">
    <property type="entry name" value="Serine hydroxymethyltransferase"/>
    <property type="match status" value="1"/>
</dbReference>
<dbReference type="Gene3D" id="3.90.1150.10">
    <property type="entry name" value="Aspartate Aminotransferase, domain 1"/>
    <property type="match status" value="1"/>
</dbReference>
<dbReference type="Gene3D" id="3.40.640.10">
    <property type="entry name" value="Type I PLP-dependent aspartate aminotransferase-like (Major domain)"/>
    <property type="match status" value="1"/>
</dbReference>
<dbReference type="HAMAP" id="MF_00051">
    <property type="entry name" value="SHMT"/>
    <property type="match status" value="1"/>
</dbReference>
<dbReference type="InterPro" id="IPR015424">
    <property type="entry name" value="PyrdxlP-dep_Trfase"/>
</dbReference>
<dbReference type="InterPro" id="IPR015421">
    <property type="entry name" value="PyrdxlP-dep_Trfase_major"/>
</dbReference>
<dbReference type="InterPro" id="IPR015422">
    <property type="entry name" value="PyrdxlP-dep_Trfase_small"/>
</dbReference>
<dbReference type="InterPro" id="IPR001085">
    <property type="entry name" value="Ser_HO-MeTrfase"/>
</dbReference>
<dbReference type="InterPro" id="IPR049943">
    <property type="entry name" value="Ser_HO-MeTrfase-like"/>
</dbReference>
<dbReference type="InterPro" id="IPR019798">
    <property type="entry name" value="Ser_HO-MeTrfase_PLP_BS"/>
</dbReference>
<dbReference type="InterPro" id="IPR039429">
    <property type="entry name" value="SHMT-like_dom"/>
</dbReference>
<dbReference type="NCBIfam" id="NF000586">
    <property type="entry name" value="PRK00011.1"/>
    <property type="match status" value="1"/>
</dbReference>
<dbReference type="PANTHER" id="PTHR11680">
    <property type="entry name" value="SERINE HYDROXYMETHYLTRANSFERASE"/>
    <property type="match status" value="1"/>
</dbReference>
<dbReference type="PANTHER" id="PTHR11680:SF50">
    <property type="entry name" value="SERINE HYDROXYMETHYLTRANSFERASE"/>
    <property type="match status" value="1"/>
</dbReference>
<dbReference type="Pfam" id="PF00464">
    <property type="entry name" value="SHMT"/>
    <property type="match status" value="1"/>
</dbReference>
<dbReference type="PIRSF" id="PIRSF000412">
    <property type="entry name" value="SHMT"/>
    <property type="match status" value="1"/>
</dbReference>
<dbReference type="SUPFAM" id="SSF53383">
    <property type="entry name" value="PLP-dependent transferases"/>
    <property type="match status" value="1"/>
</dbReference>
<dbReference type="PROSITE" id="PS00096">
    <property type="entry name" value="SHMT"/>
    <property type="match status" value="1"/>
</dbReference>
<comment type="function">
    <text evidence="1">Catalyzes the reversible interconversion of serine and glycine with tetrahydrofolate (THF) serving as the one-carbon carrier. This reaction serves as the major source of one-carbon groups required for the biosynthesis of purines, thymidylate, methionine, and other important biomolecules. Also exhibits THF-independent aldolase activity toward beta-hydroxyamino acids, producing glycine and aldehydes, via a retro-aldol mechanism.</text>
</comment>
<comment type="catalytic activity">
    <reaction evidence="1">
        <text>(6R)-5,10-methylene-5,6,7,8-tetrahydrofolate + glycine + H2O = (6S)-5,6,7,8-tetrahydrofolate + L-serine</text>
        <dbReference type="Rhea" id="RHEA:15481"/>
        <dbReference type="ChEBI" id="CHEBI:15377"/>
        <dbReference type="ChEBI" id="CHEBI:15636"/>
        <dbReference type="ChEBI" id="CHEBI:33384"/>
        <dbReference type="ChEBI" id="CHEBI:57305"/>
        <dbReference type="ChEBI" id="CHEBI:57453"/>
        <dbReference type="EC" id="2.1.2.1"/>
    </reaction>
</comment>
<comment type="cofactor">
    <cofactor evidence="1">
        <name>pyridoxal 5'-phosphate</name>
        <dbReference type="ChEBI" id="CHEBI:597326"/>
    </cofactor>
</comment>
<comment type="pathway">
    <text evidence="1">One-carbon metabolism; tetrahydrofolate interconversion.</text>
</comment>
<comment type="pathway">
    <text evidence="1">Amino-acid biosynthesis; glycine biosynthesis; glycine from L-serine: step 1/1.</text>
</comment>
<comment type="subunit">
    <text evidence="1">Homodimer.</text>
</comment>
<comment type="subcellular location">
    <subcellularLocation>
        <location evidence="1">Cytoplasm</location>
    </subcellularLocation>
</comment>
<comment type="similarity">
    <text evidence="1">Belongs to the SHMT family.</text>
</comment>
<accession>Q3KDV1</accession>
<keyword id="KW-0028">Amino-acid biosynthesis</keyword>
<keyword id="KW-0963">Cytoplasm</keyword>
<keyword id="KW-0554">One-carbon metabolism</keyword>
<keyword id="KW-0663">Pyridoxal phosphate</keyword>
<keyword id="KW-0808">Transferase</keyword>
<evidence type="ECO:0000255" key="1">
    <source>
        <dbReference type="HAMAP-Rule" id="MF_00051"/>
    </source>
</evidence>